<proteinExistence type="evidence at transcript level"/>
<dbReference type="EMBL" id="AY442289">
    <property type="protein sequence ID" value="AAR19275.1"/>
    <property type="molecule type" value="mRNA"/>
</dbReference>
<dbReference type="SMR" id="Q6T269"/>
<dbReference type="MEROPS" id="I02.062"/>
<dbReference type="MEROPS" id="I02.955"/>
<dbReference type="GO" id="GO:0005576">
    <property type="term" value="C:extracellular region"/>
    <property type="evidence" value="ECO:0007669"/>
    <property type="project" value="UniProtKB-SubCell"/>
</dbReference>
<dbReference type="GO" id="GO:0004867">
    <property type="term" value="F:serine-type endopeptidase inhibitor activity"/>
    <property type="evidence" value="ECO:0007669"/>
    <property type="project" value="UniProtKB-KW"/>
</dbReference>
<dbReference type="CDD" id="cd22608">
    <property type="entry name" value="Kunitz_PPTI-like"/>
    <property type="match status" value="2"/>
</dbReference>
<dbReference type="FunFam" id="4.10.410.10:FF:000021">
    <property type="entry name" value="Serine protease inhibitor, putative"/>
    <property type="match status" value="2"/>
</dbReference>
<dbReference type="Gene3D" id="4.10.410.10">
    <property type="entry name" value="Pancreatic trypsin inhibitor Kunitz domain"/>
    <property type="match status" value="2"/>
</dbReference>
<dbReference type="InterPro" id="IPR029856">
    <property type="entry name" value="AMBP"/>
</dbReference>
<dbReference type="InterPro" id="IPR002223">
    <property type="entry name" value="Kunitz_BPTI"/>
</dbReference>
<dbReference type="InterPro" id="IPR036880">
    <property type="entry name" value="Kunitz_BPTI_sf"/>
</dbReference>
<dbReference type="InterPro" id="IPR020901">
    <property type="entry name" value="Prtase_inh_Kunz-CS"/>
</dbReference>
<dbReference type="PANTHER" id="PTHR46676">
    <property type="entry name" value="PROTEIN AMBP"/>
    <property type="match status" value="1"/>
</dbReference>
<dbReference type="PANTHER" id="PTHR46676:SF1">
    <property type="entry name" value="PROTEIN AMBP"/>
    <property type="match status" value="1"/>
</dbReference>
<dbReference type="Pfam" id="PF00014">
    <property type="entry name" value="Kunitz_BPTI"/>
    <property type="match status" value="2"/>
</dbReference>
<dbReference type="PRINTS" id="PR00759">
    <property type="entry name" value="BASICPTASE"/>
</dbReference>
<dbReference type="SMART" id="SM00131">
    <property type="entry name" value="KU"/>
    <property type="match status" value="2"/>
</dbReference>
<dbReference type="SUPFAM" id="SSF57362">
    <property type="entry name" value="BPTI-like"/>
    <property type="match status" value="2"/>
</dbReference>
<dbReference type="PROSITE" id="PS00280">
    <property type="entry name" value="BPTI_KUNITZ_1"/>
    <property type="match status" value="2"/>
</dbReference>
<dbReference type="PROSITE" id="PS50279">
    <property type="entry name" value="BPTI_KUNITZ_2"/>
    <property type="match status" value="2"/>
</dbReference>
<sequence length="151" mass="16976">PLRPGTEKHTFPFPAEFCNLPADLGPCKNYTGRFYYDSASNKCEVFIYGGCPGNANNFKTREECRKTCVEICILPAELGPCDEYTGRFYYDSASNKCEVFIYGGCQGNANNFKTRDECRKTCVEICILPAELGPCDEYTGRLLLRLGIKQM</sequence>
<keyword id="KW-1015">Disulfide bond</keyword>
<keyword id="KW-0325">Glycoprotein</keyword>
<keyword id="KW-0646">Protease inhibitor</keyword>
<keyword id="KW-0677">Repeat</keyword>
<keyword id="KW-0964">Secreted</keyword>
<keyword id="KW-0722">Serine protease inhibitor</keyword>
<evidence type="ECO:0000250" key="1"/>
<evidence type="ECO:0000255" key="2"/>
<evidence type="ECO:0000255" key="3">
    <source>
        <dbReference type="PROSITE-ProRule" id="PRU00031"/>
    </source>
</evidence>
<evidence type="ECO:0000305" key="4"/>
<name>VKT3_BITGA</name>
<reference key="1">
    <citation type="journal article" date="2004" name="Gene">
        <title>Bitis gabonica (Gaboon viper) snake venom gland: toward a catalog for the full-length transcripts (cDNA) and proteins.</title>
        <authorList>
            <person name="Francischetti I.M.B."/>
            <person name="My-Pham V."/>
            <person name="Harrison J."/>
            <person name="Garfield M.K."/>
            <person name="Ribeiro J.M.C."/>
        </authorList>
    </citation>
    <scope>NUCLEOTIDE SEQUENCE [MRNA]</scope>
    <source>
        <tissue>Venom gland</tissue>
    </source>
</reference>
<organism>
    <name type="scientific">Bitis gabonica</name>
    <name type="common">Gaboon adder</name>
    <name type="synonym">Gaboon viper</name>
    <dbReference type="NCBI Taxonomy" id="8694"/>
    <lineage>
        <taxon>Eukaryota</taxon>
        <taxon>Metazoa</taxon>
        <taxon>Chordata</taxon>
        <taxon>Craniata</taxon>
        <taxon>Vertebrata</taxon>
        <taxon>Euteleostomi</taxon>
        <taxon>Lepidosauria</taxon>
        <taxon>Squamata</taxon>
        <taxon>Bifurcata</taxon>
        <taxon>Unidentata</taxon>
        <taxon>Episquamata</taxon>
        <taxon>Toxicofera</taxon>
        <taxon>Serpentes</taxon>
        <taxon>Colubroidea</taxon>
        <taxon>Viperidae</taxon>
        <taxon>Viperinae</taxon>
        <taxon>Bitis</taxon>
    </lineage>
</organism>
<comment type="function">
    <text evidence="1">Serine protease inhibitor.</text>
</comment>
<comment type="subcellular location">
    <subcellularLocation>
        <location evidence="1">Secreted</location>
    </subcellularLocation>
</comment>
<comment type="tissue specificity">
    <text>Expressed by the venom gland.</text>
</comment>
<comment type="similarity">
    <text evidence="4">Belongs to the venom Kunitz-type family.</text>
</comment>
<protein>
    <recommendedName>
        <fullName>Kunitz-type serine protease inhibitor bitisilin-3</fullName>
    </recommendedName>
    <alternativeName>
        <fullName>Two-Kunitz protease inhibitor</fullName>
    </alternativeName>
</protein>
<feature type="chain" id="PRO_0000376870" description="Kunitz-type serine protease inhibitor bitisilin-3">
    <location>
        <begin position="1" status="less than"/>
        <end position="151"/>
    </location>
</feature>
<feature type="domain" description="BPTI/Kunitz inhibitor 1" evidence="3">
    <location>
        <begin position="18"/>
        <end position="68"/>
    </location>
</feature>
<feature type="domain" description="BPTI/Kunitz inhibitor 2" evidence="3">
    <location>
        <begin position="72"/>
        <end position="122"/>
    </location>
</feature>
<feature type="site" description="Reactive bond for trypsin" evidence="1">
    <location>
        <begin position="28"/>
        <end position="29"/>
    </location>
</feature>
<feature type="glycosylation site" description="N-linked (GlcNAc...) asparagine" evidence="2">
    <location>
        <position position="29"/>
    </location>
</feature>
<feature type="disulfide bond" evidence="3">
    <location>
        <begin position="18"/>
        <end position="68"/>
    </location>
</feature>
<feature type="disulfide bond" evidence="3">
    <location>
        <begin position="27"/>
        <end position="51"/>
    </location>
</feature>
<feature type="disulfide bond" evidence="3">
    <location>
        <begin position="43"/>
        <end position="64"/>
    </location>
</feature>
<feature type="disulfide bond" evidence="3">
    <location>
        <begin position="72"/>
        <end position="122"/>
    </location>
</feature>
<feature type="disulfide bond" evidence="3">
    <location>
        <begin position="81"/>
        <end position="105"/>
    </location>
</feature>
<feature type="disulfide bond" evidence="3">
    <location>
        <begin position="97"/>
        <end position="118"/>
    </location>
</feature>
<feature type="non-terminal residue">
    <location>
        <position position="1"/>
    </location>
</feature>
<accession>Q6T269</accession>